<sequence>MAPNLRKSHPLLKMVNNSLIDLPTPPNISAWWNFGSLLGICLITQILTGLLLAMHYTADTTLAFSSVAHTCRNVQYGWLIRNLHANGASLFFICVYLHIGRGLYYGSYLYKETWNTGIILLLTLMATAFVGYVLPWGQMSFWGATVITNLFSAIPYIGQTLVEWAWGGFSVDNPTLTRFFALHFLLPFLIAGLTLIHLTFLHESGSNNPLGIVSNCDKIPFHPYFSLKDLLGAALMLSPLAILALFTPNFLGDPENFTPANPLVTPPHIKPEWYFLFAYAILRSIPNKLGGVLALAASVLILFLSPFLHKSKQRTMTFRPLSQLLFWFLVANLLILTWVGSQPVEHPFIIIGQLASFTYFTTLLVLLPLTGALENKILNY</sequence>
<evidence type="ECO:0000250" key="1"/>
<evidence type="ECO:0000250" key="2">
    <source>
        <dbReference type="UniProtKB" id="P00157"/>
    </source>
</evidence>
<evidence type="ECO:0000255" key="3">
    <source>
        <dbReference type="PROSITE-ProRule" id="PRU00967"/>
    </source>
</evidence>
<evidence type="ECO:0000255" key="4">
    <source>
        <dbReference type="PROSITE-ProRule" id="PRU00968"/>
    </source>
</evidence>
<protein>
    <recommendedName>
        <fullName>Cytochrome b</fullName>
    </recommendedName>
    <alternativeName>
        <fullName>Complex III subunit 3</fullName>
    </alternativeName>
    <alternativeName>
        <fullName>Complex III subunit III</fullName>
    </alternativeName>
    <alternativeName>
        <fullName>Cytochrome b-c1 complex subunit 3</fullName>
    </alternativeName>
    <alternativeName>
        <fullName>Ubiquinol-cytochrome-c reductase complex cytochrome b subunit</fullName>
    </alternativeName>
</protein>
<name>CYB_HERCA</name>
<keyword id="KW-0249">Electron transport</keyword>
<keyword id="KW-0349">Heme</keyword>
<keyword id="KW-0408">Iron</keyword>
<keyword id="KW-0472">Membrane</keyword>
<keyword id="KW-0479">Metal-binding</keyword>
<keyword id="KW-0496">Mitochondrion</keyword>
<keyword id="KW-0999">Mitochondrion inner membrane</keyword>
<keyword id="KW-0679">Respiratory chain</keyword>
<keyword id="KW-0812">Transmembrane</keyword>
<keyword id="KW-1133">Transmembrane helix</keyword>
<keyword id="KW-0813">Transport</keyword>
<keyword id="KW-0830">Ubiquinone</keyword>
<proteinExistence type="inferred from homology"/>
<organism>
    <name type="scientific">Herpetotheres cachinnans</name>
    <name type="common">Laughing falcon</name>
    <name type="synonym">Falco cachinnans</name>
    <dbReference type="NCBI Taxonomy" id="56343"/>
    <lineage>
        <taxon>Eukaryota</taxon>
        <taxon>Metazoa</taxon>
        <taxon>Chordata</taxon>
        <taxon>Craniata</taxon>
        <taxon>Vertebrata</taxon>
        <taxon>Euteleostomi</taxon>
        <taxon>Archelosauria</taxon>
        <taxon>Archosauria</taxon>
        <taxon>Dinosauria</taxon>
        <taxon>Saurischia</taxon>
        <taxon>Theropoda</taxon>
        <taxon>Coelurosauria</taxon>
        <taxon>Aves</taxon>
        <taxon>Neognathae</taxon>
        <taxon>Neoaves</taxon>
        <taxon>Telluraves</taxon>
        <taxon>Australaves</taxon>
        <taxon>Falconiformes</taxon>
        <taxon>Falconidae</taxon>
        <taxon>Herpetotheres</taxon>
    </lineage>
</organism>
<feature type="chain" id="PRO_0000061031" description="Cytochrome b">
    <location>
        <begin position="1"/>
        <end position="380"/>
    </location>
</feature>
<feature type="transmembrane region" description="Helical" evidence="2">
    <location>
        <begin position="34"/>
        <end position="54"/>
    </location>
</feature>
<feature type="transmembrane region" description="Helical" evidence="2">
    <location>
        <begin position="78"/>
        <end position="99"/>
    </location>
</feature>
<feature type="transmembrane region" description="Helical" evidence="2">
    <location>
        <begin position="114"/>
        <end position="134"/>
    </location>
</feature>
<feature type="transmembrane region" description="Helical" evidence="2">
    <location>
        <begin position="179"/>
        <end position="199"/>
    </location>
</feature>
<feature type="transmembrane region" description="Helical" evidence="2">
    <location>
        <begin position="227"/>
        <end position="247"/>
    </location>
</feature>
<feature type="transmembrane region" description="Helical" evidence="2">
    <location>
        <begin position="289"/>
        <end position="309"/>
    </location>
</feature>
<feature type="transmembrane region" description="Helical" evidence="2">
    <location>
        <begin position="321"/>
        <end position="341"/>
    </location>
</feature>
<feature type="transmembrane region" description="Helical" evidence="2">
    <location>
        <begin position="348"/>
        <end position="368"/>
    </location>
</feature>
<feature type="binding site" description="axial binding residue" evidence="2">
    <location>
        <position position="84"/>
    </location>
    <ligand>
        <name>heme b</name>
        <dbReference type="ChEBI" id="CHEBI:60344"/>
        <label>b562</label>
    </ligand>
    <ligandPart>
        <name>Fe</name>
        <dbReference type="ChEBI" id="CHEBI:18248"/>
    </ligandPart>
</feature>
<feature type="binding site" description="axial binding residue" evidence="2">
    <location>
        <position position="98"/>
    </location>
    <ligand>
        <name>heme b</name>
        <dbReference type="ChEBI" id="CHEBI:60344"/>
        <label>b566</label>
    </ligand>
    <ligandPart>
        <name>Fe</name>
        <dbReference type="ChEBI" id="CHEBI:18248"/>
    </ligandPart>
</feature>
<feature type="binding site" description="axial binding residue" evidence="2">
    <location>
        <position position="183"/>
    </location>
    <ligand>
        <name>heme b</name>
        <dbReference type="ChEBI" id="CHEBI:60344"/>
        <label>b562</label>
    </ligand>
    <ligandPart>
        <name>Fe</name>
        <dbReference type="ChEBI" id="CHEBI:18248"/>
    </ligandPart>
</feature>
<feature type="binding site" description="axial binding residue" evidence="2">
    <location>
        <position position="197"/>
    </location>
    <ligand>
        <name>heme b</name>
        <dbReference type="ChEBI" id="CHEBI:60344"/>
        <label>b566</label>
    </ligand>
    <ligandPart>
        <name>Fe</name>
        <dbReference type="ChEBI" id="CHEBI:18248"/>
    </ligandPart>
</feature>
<feature type="binding site" evidence="2">
    <location>
        <position position="202"/>
    </location>
    <ligand>
        <name>a ubiquinone</name>
        <dbReference type="ChEBI" id="CHEBI:16389"/>
    </ligand>
</feature>
<gene>
    <name type="primary">MT-CYB</name>
    <name type="synonym">COB</name>
    <name type="synonym">CYTB</name>
    <name type="synonym">MTCYB</name>
</gene>
<dbReference type="EMBL" id="U83319">
    <property type="protein sequence ID" value="AAC60236.1"/>
    <property type="molecule type" value="Genomic_DNA"/>
</dbReference>
<dbReference type="SMR" id="O21175"/>
<dbReference type="GO" id="GO:0005743">
    <property type="term" value="C:mitochondrial inner membrane"/>
    <property type="evidence" value="ECO:0007669"/>
    <property type="project" value="UniProtKB-SubCell"/>
</dbReference>
<dbReference type="GO" id="GO:0045275">
    <property type="term" value="C:respiratory chain complex III"/>
    <property type="evidence" value="ECO:0007669"/>
    <property type="project" value="InterPro"/>
</dbReference>
<dbReference type="GO" id="GO:0046872">
    <property type="term" value="F:metal ion binding"/>
    <property type="evidence" value="ECO:0007669"/>
    <property type="project" value="UniProtKB-KW"/>
</dbReference>
<dbReference type="GO" id="GO:0008121">
    <property type="term" value="F:ubiquinol-cytochrome-c reductase activity"/>
    <property type="evidence" value="ECO:0007669"/>
    <property type="project" value="InterPro"/>
</dbReference>
<dbReference type="GO" id="GO:0006122">
    <property type="term" value="P:mitochondrial electron transport, ubiquinol to cytochrome c"/>
    <property type="evidence" value="ECO:0007669"/>
    <property type="project" value="TreeGrafter"/>
</dbReference>
<dbReference type="CDD" id="cd00290">
    <property type="entry name" value="cytochrome_b_C"/>
    <property type="match status" value="1"/>
</dbReference>
<dbReference type="CDD" id="cd00284">
    <property type="entry name" value="Cytochrome_b_N"/>
    <property type="match status" value="1"/>
</dbReference>
<dbReference type="FunFam" id="1.20.810.10:FF:000002">
    <property type="entry name" value="Cytochrome b"/>
    <property type="match status" value="1"/>
</dbReference>
<dbReference type="Gene3D" id="1.20.810.10">
    <property type="entry name" value="Cytochrome Bc1 Complex, Chain C"/>
    <property type="match status" value="1"/>
</dbReference>
<dbReference type="InterPro" id="IPR005798">
    <property type="entry name" value="Cyt_b/b6_C"/>
</dbReference>
<dbReference type="InterPro" id="IPR036150">
    <property type="entry name" value="Cyt_b/b6_C_sf"/>
</dbReference>
<dbReference type="InterPro" id="IPR005797">
    <property type="entry name" value="Cyt_b/b6_N"/>
</dbReference>
<dbReference type="InterPro" id="IPR027387">
    <property type="entry name" value="Cytb/b6-like_sf"/>
</dbReference>
<dbReference type="InterPro" id="IPR030689">
    <property type="entry name" value="Cytochrome_b"/>
</dbReference>
<dbReference type="InterPro" id="IPR048260">
    <property type="entry name" value="Cytochrome_b_C_euk/bac"/>
</dbReference>
<dbReference type="InterPro" id="IPR048259">
    <property type="entry name" value="Cytochrome_b_N_euk/bac"/>
</dbReference>
<dbReference type="InterPro" id="IPR016174">
    <property type="entry name" value="Di-haem_cyt_TM"/>
</dbReference>
<dbReference type="PANTHER" id="PTHR19271">
    <property type="entry name" value="CYTOCHROME B"/>
    <property type="match status" value="1"/>
</dbReference>
<dbReference type="PANTHER" id="PTHR19271:SF16">
    <property type="entry name" value="CYTOCHROME B"/>
    <property type="match status" value="1"/>
</dbReference>
<dbReference type="Pfam" id="PF00032">
    <property type="entry name" value="Cytochrom_B_C"/>
    <property type="match status" value="1"/>
</dbReference>
<dbReference type="Pfam" id="PF00033">
    <property type="entry name" value="Cytochrome_B"/>
    <property type="match status" value="1"/>
</dbReference>
<dbReference type="PIRSF" id="PIRSF038885">
    <property type="entry name" value="COB"/>
    <property type="match status" value="1"/>
</dbReference>
<dbReference type="SUPFAM" id="SSF81648">
    <property type="entry name" value="a domain/subunit of cytochrome bc1 complex (Ubiquinol-cytochrome c reductase)"/>
    <property type="match status" value="1"/>
</dbReference>
<dbReference type="SUPFAM" id="SSF81342">
    <property type="entry name" value="Transmembrane di-heme cytochromes"/>
    <property type="match status" value="1"/>
</dbReference>
<dbReference type="PROSITE" id="PS51003">
    <property type="entry name" value="CYTB_CTER"/>
    <property type="match status" value="1"/>
</dbReference>
<dbReference type="PROSITE" id="PS51002">
    <property type="entry name" value="CYTB_NTER"/>
    <property type="match status" value="1"/>
</dbReference>
<comment type="function">
    <text evidence="2">Component of the ubiquinol-cytochrome c reductase complex (complex III or cytochrome b-c1 complex) that is part of the mitochondrial respiratory chain. The b-c1 complex mediates electron transfer from ubiquinol to cytochrome c. Contributes to the generation of a proton gradient across the mitochondrial membrane that is then used for ATP synthesis.</text>
</comment>
<comment type="cofactor">
    <cofactor evidence="2">
        <name>heme b</name>
        <dbReference type="ChEBI" id="CHEBI:60344"/>
    </cofactor>
    <text evidence="2">Binds 2 heme b groups non-covalently.</text>
</comment>
<comment type="subunit">
    <text evidence="2">The cytochrome bc1 complex contains 11 subunits: 3 respiratory subunits (MT-CYB, CYC1 and UQCRFS1), 2 core proteins (UQCRC1 and UQCRC2) and 6 low-molecular weight proteins (UQCRH/QCR6, UQCRB/QCR7, UQCRQ/QCR8, UQCR10/QCR9, UQCR11/QCR10 and a cleavage product of UQCRFS1). This cytochrome bc1 complex then forms a dimer.</text>
</comment>
<comment type="subcellular location">
    <subcellularLocation>
        <location evidence="2">Mitochondrion inner membrane</location>
        <topology evidence="2">Multi-pass membrane protein</topology>
    </subcellularLocation>
</comment>
<comment type="miscellaneous">
    <text evidence="1">Heme 1 (or BL or b562) is low-potential and absorbs at about 562 nm, and heme 2 (or BH or b566) is high-potential and absorbs at about 566 nm.</text>
</comment>
<comment type="similarity">
    <text evidence="3 4">Belongs to the cytochrome b family.</text>
</comment>
<comment type="caution">
    <text evidence="2">The full-length protein contains only eight transmembrane helices, not nine as predicted by bioinformatics tools.</text>
</comment>
<geneLocation type="mitochondrion"/>
<reference key="1">
    <citation type="journal article" date="1997" name="Mol. Phylogenet. Evol.">
        <title>Correlation of functional domains and rates of nucleotide substitution in cytochrome b.</title>
        <authorList>
            <person name="Griffiths C.S."/>
        </authorList>
    </citation>
    <scope>NUCLEOTIDE SEQUENCE [GENOMIC DNA]</scope>
</reference>
<accession>O21175</accession>